<evidence type="ECO:0000255" key="1">
    <source>
        <dbReference type="HAMAP-Rule" id="MF_01633"/>
    </source>
</evidence>
<comment type="function">
    <text evidence="1">Catalyzes the ATP-dependent conversion of 7-carboxy-7-deazaguanine (CDG) to 7-cyano-7-deazaguanine (preQ(0)).</text>
</comment>
<comment type="catalytic activity">
    <reaction evidence="1">
        <text>7-carboxy-7-deazaguanine + NH4(+) + ATP = 7-cyano-7-deazaguanine + ADP + phosphate + H2O + H(+)</text>
        <dbReference type="Rhea" id="RHEA:27982"/>
        <dbReference type="ChEBI" id="CHEBI:15377"/>
        <dbReference type="ChEBI" id="CHEBI:15378"/>
        <dbReference type="ChEBI" id="CHEBI:28938"/>
        <dbReference type="ChEBI" id="CHEBI:30616"/>
        <dbReference type="ChEBI" id="CHEBI:43474"/>
        <dbReference type="ChEBI" id="CHEBI:45075"/>
        <dbReference type="ChEBI" id="CHEBI:61036"/>
        <dbReference type="ChEBI" id="CHEBI:456216"/>
        <dbReference type="EC" id="6.3.4.20"/>
    </reaction>
</comment>
<comment type="cofactor">
    <cofactor evidence="1">
        <name>Zn(2+)</name>
        <dbReference type="ChEBI" id="CHEBI:29105"/>
    </cofactor>
    <text evidence="1">Binds 1 zinc ion per subunit.</text>
</comment>
<comment type="pathway">
    <text evidence="1">Purine metabolism; 7-cyano-7-deazaguanine biosynthesis.</text>
</comment>
<comment type="similarity">
    <text evidence="1">Belongs to the QueC family.</text>
</comment>
<name>QUEC_METPP</name>
<sequence>MSLDPRGALVLFSGGQDSTACLAWALEHHAHVETIGFDYGQRHVVELECRVQVREAIARSFPLWAGRLANDHVLDLGLLGQISDTALTSARAIEMQANGLPSTFVPGRNLLFLGFAATVAYRRNLSVLVGGMCETDYSGYPDCRDNTLKALQVALSLGMATPMTIETPLMWLDKARTWALTDRLGGRALNELILEHTHSCYLGDRSVRHAWGYGCNACPACELRRKGYEAWCAGA</sequence>
<gene>
    <name evidence="1" type="primary">queC</name>
    <name type="ordered locus">Mpe_A0270</name>
</gene>
<dbReference type="EC" id="6.3.4.20" evidence="1"/>
<dbReference type="EMBL" id="CP000555">
    <property type="protein sequence ID" value="ABM93232.1"/>
    <property type="molecule type" value="Genomic_DNA"/>
</dbReference>
<dbReference type="RefSeq" id="WP_011827871.1">
    <property type="nucleotide sequence ID" value="NC_008825.1"/>
</dbReference>
<dbReference type="SMR" id="A2SCE3"/>
<dbReference type="STRING" id="420662.Mpe_A0270"/>
<dbReference type="KEGG" id="mpt:Mpe_A0270"/>
<dbReference type="eggNOG" id="COG0603">
    <property type="taxonomic scope" value="Bacteria"/>
</dbReference>
<dbReference type="HOGENOM" id="CLU_081854_0_0_4"/>
<dbReference type="UniPathway" id="UPA00391"/>
<dbReference type="Proteomes" id="UP000000366">
    <property type="component" value="Chromosome"/>
</dbReference>
<dbReference type="GO" id="GO:0005524">
    <property type="term" value="F:ATP binding"/>
    <property type="evidence" value="ECO:0007669"/>
    <property type="project" value="UniProtKB-UniRule"/>
</dbReference>
<dbReference type="GO" id="GO:0016879">
    <property type="term" value="F:ligase activity, forming carbon-nitrogen bonds"/>
    <property type="evidence" value="ECO:0007669"/>
    <property type="project" value="UniProtKB-UniRule"/>
</dbReference>
<dbReference type="GO" id="GO:0008270">
    <property type="term" value="F:zinc ion binding"/>
    <property type="evidence" value="ECO:0007669"/>
    <property type="project" value="UniProtKB-UniRule"/>
</dbReference>
<dbReference type="GO" id="GO:0008616">
    <property type="term" value="P:queuosine biosynthetic process"/>
    <property type="evidence" value="ECO:0007669"/>
    <property type="project" value="UniProtKB-UniRule"/>
</dbReference>
<dbReference type="CDD" id="cd01995">
    <property type="entry name" value="QueC-like"/>
    <property type="match status" value="1"/>
</dbReference>
<dbReference type="Gene3D" id="3.40.50.620">
    <property type="entry name" value="HUPs"/>
    <property type="match status" value="1"/>
</dbReference>
<dbReference type="HAMAP" id="MF_01633">
    <property type="entry name" value="QueC"/>
    <property type="match status" value="1"/>
</dbReference>
<dbReference type="InterPro" id="IPR018317">
    <property type="entry name" value="QueC"/>
</dbReference>
<dbReference type="InterPro" id="IPR014729">
    <property type="entry name" value="Rossmann-like_a/b/a_fold"/>
</dbReference>
<dbReference type="NCBIfam" id="TIGR00364">
    <property type="entry name" value="7-cyano-7-deazaguanine synthase QueC"/>
    <property type="match status" value="1"/>
</dbReference>
<dbReference type="PANTHER" id="PTHR42914">
    <property type="entry name" value="7-CYANO-7-DEAZAGUANINE SYNTHASE"/>
    <property type="match status" value="1"/>
</dbReference>
<dbReference type="PANTHER" id="PTHR42914:SF1">
    <property type="entry name" value="7-CYANO-7-DEAZAGUANINE SYNTHASE"/>
    <property type="match status" value="1"/>
</dbReference>
<dbReference type="Pfam" id="PF06508">
    <property type="entry name" value="QueC"/>
    <property type="match status" value="1"/>
</dbReference>
<dbReference type="PIRSF" id="PIRSF006293">
    <property type="entry name" value="ExsB"/>
    <property type="match status" value="1"/>
</dbReference>
<dbReference type="SUPFAM" id="SSF52402">
    <property type="entry name" value="Adenine nucleotide alpha hydrolases-like"/>
    <property type="match status" value="1"/>
</dbReference>
<protein>
    <recommendedName>
        <fullName evidence="1">7-cyano-7-deazaguanine synthase</fullName>
        <ecNumber evidence="1">6.3.4.20</ecNumber>
    </recommendedName>
    <alternativeName>
        <fullName evidence="1">7-cyano-7-carbaguanine synthase</fullName>
    </alternativeName>
    <alternativeName>
        <fullName evidence="1">PreQ(0) synthase</fullName>
    </alternativeName>
    <alternativeName>
        <fullName evidence="1">Queuosine biosynthesis protein QueC</fullName>
    </alternativeName>
</protein>
<proteinExistence type="inferred from homology"/>
<reference key="1">
    <citation type="journal article" date="2007" name="J. Bacteriol.">
        <title>Whole-genome analysis of the methyl tert-butyl ether-degrading beta-proteobacterium Methylibium petroleiphilum PM1.</title>
        <authorList>
            <person name="Kane S.R."/>
            <person name="Chakicherla A.Y."/>
            <person name="Chain P.S.G."/>
            <person name="Schmidt R."/>
            <person name="Shin M.W."/>
            <person name="Legler T.C."/>
            <person name="Scow K.M."/>
            <person name="Larimer F.W."/>
            <person name="Lucas S.M."/>
            <person name="Richardson P.M."/>
            <person name="Hristova K.R."/>
        </authorList>
    </citation>
    <scope>NUCLEOTIDE SEQUENCE [LARGE SCALE GENOMIC DNA]</scope>
    <source>
        <strain>ATCC BAA-1232 / LMG 22953 / PM1</strain>
    </source>
</reference>
<accession>A2SCE3</accession>
<keyword id="KW-0067">ATP-binding</keyword>
<keyword id="KW-0436">Ligase</keyword>
<keyword id="KW-0479">Metal-binding</keyword>
<keyword id="KW-0547">Nucleotide-binding</keyword>
<keyword id="KW-0671">Queuosine biosynthesis</keyword>
<keyword id="KW-1185">Reference proteome</keyword>
<keyword id="KW-0862">Zinc</keyword>
<organism>
    <name type="scientific">Methylibium petroleiphilum (strain ATCC BAA-1232 / LMG 22953 / PM1)</name>
    <dbReference type="NCBI Taxonomy" id="420662"/>
    <lineage>
        <taxon>Bacteria</taxon>
        <taxon>Pseudomonadati</taxon>
        <taxon>Pseudomonadota</taxon>
        <taxon>Betaproteobacteria</taxon>
        <taxon>Burkholderiales</taxon>
        <taxon>Sphaerotilaceae</taxon>
        <taxon>Methylibium</taxon>
    </lineage>
</organism>
<feature type="chain" id="PRO_0000336924" description="7-cyano-7-deazaguanine synthase">
    <location>
        <begin position="1"/>
        <end position="235"/>
    </location>
</feature>
<feature type="binding site" evidence="1">
    <location>
        <begin position="12"/>
        <end position="22"/>
    </location>
    <ligand>
        <name>ATP</name>
        <dbReference type="ChEBI" id="CHEBI:30616"/>
    </ligand>
</feature>
<feature type="binding site" evidence="1">
    <location>
        <position position="200"/>
    </location>
    <ligand>
        <name>Zn(2+)</name>
        <dbReference type="ChEBI" id="CHEBI:29105"/>
    </ligand>
</feature>
<feature type="binding site" evidence="1">
    <location>
        <position position="215"/>
    </location>
    <ligand>
        <name>Zn(2+)</name>
        <dbReference type="ChEBI" id="CHEBI:29105"/>
    </ligand>
</feature>
<feature type="binding site" evidence="1">
    <location>
        <position position="218"/>
    </location>
    <ligand>
        <name>Zn(2+)</name>
        <dbReference type="ChEBI" id="CHEBI:29105"/>
    </ligand>
</feature>
<feature type="binding site" evidence="1">
    <location>
        <position position="221"/>
    </location>
    <ligand>
        <name>Zn(2+)</name>
        <dbReference type="ChEBI" id="CHEBI:29105"/>
    </ligand>
</feature>